<gene>
    <name evidence="5" type="ordered locus">Avin_45950</name>
</gene>
<reference key="1">
    <citation type="journal article" date="2009" name="J. Bacteriol.">
        <title>Genome sequence of Azotobacter vinelandii, an obligate aerobe specialized to support diverse anaerobic metabolic processes.</title>
        <authorList>
            <person name="Setubal J.C."/>
            <person name="Dos Santos P."/>
            <person name="Goldman B.S."/>
            <person name="Ertesvaag H."/>
            <person name="Espin G."/>
            <person name="Rubio L.M."/>
            <person name="Valla S."/>
            <person name="Almeida N.F."/>
            <person name="Balasubramanian D."/>
            <person name="Cromes L."/>
            <person name="Curatti L."/>
            <person name="Du Z."/>
            <person name="Godsy E."/>
            <person name="Goodner B."/>
            <person name="Hellner-Burris K."/>
            <person name="Hernandez J.A."/>
            <person name="Houmiel K."/>
            <person name="Imperial J."/>
            <person name="Kennedy C."/>
            <person name="Larson T.J."/>
            <person name="Latreille P."/>
            <person name="Ligon L.S."/>
            <person name="Lu J."/>
            <person name="Maerk M."/>
            <person name="Miller N.M."/>
            <person name="Norton S."/>
            <person name="O'Carroll I.P."/>
            <person name="Paulsen I."/>
            <person name="Raulfs E.C."/>
            <person name="Roemer R."/>
            <person name="Rosser J."/>
            <person name="Segura D."/>
            <person name="Slater S."/>
            <person name="Stricklin S.L."/>
            <person name="Studholme D.J."/>
            <person name="Sun J."/>
            <person name="Viana C.J."/>
            <person name="Wallin E."/>
            <person name="Wang B."/>
            <person name="Wheeler C."/>
            <person name="Zhu H."/>
            <person name="Dean D.R."/>
            <person name="Dixon R."/>
            <person name="Wood D."/>
        </authorList>
    </citation>
    <scope>NUCLEOTIDE SEQUENCE [LARGE SCALE GENOMIC DNA]</scope>
    <source>
        <strain>DJ / ATCC BAA-1303</strain>
    </source>
</reference>
<reference key="2">
    <citation type="journal article" date="1996" name="Biochem. J.">
        <title>Flavodoxin 1 of Azotobacter vinelandii: characterization and role in electron donation to purified assimilatory nitrate reductase.</title>
        <authorList>
            <person name="Gangeswaran R."/>
            <person name="Eady R.R."/>
        </authorList>
    </citation>
    <scope>PROTEIN SEQUENCE OF 2-21</scope>
    <scope>MASS SPECTROMETRY</scope>
    <scope>FUNCTION</scope>
    <scope>COFACTOR</scope>
    <scope>INDUCTION</scope>
    <scope>BIOPHYSICOCHEMICAL PROPERTIES</scope>
    <source>
        <strain>OP / UW136</strain>
    </source>
</reference>
<sequence length="174" mass="19559">MSRIGIFYGSSSGVTGKVAEKLAELLGEERCDLYNMEEDFVDFDDMLKYDHLLFGCSTWGSGEVQNDWRDPLLELDNEKPDFSGKTIALFGAGDYVSHGEQFVSALGVLYDKFKARGAALVGSFPTDGYTYEYSFAVRDGKFVGLPFDKINEVDKTDERLERWIAVLQEEFLPA</sequence>
<name>FLAW_AZOVD</name>
<organism>
    <name type="scientific">Azotobacter vinelandii (strain DJ / ATCC BAA-1303)</name>
    <dbReference type="NCBI Taxonomy" id="322710"/>
    <lineage>
        <taxon>Bacteria</taxon>
        <taxon>Pseudomonadati</taxon>
        <taxon>Pseudomonadota</taxon>
        <taxon>Gammaproteobacteria</taxon>
        <taxon>Pseudomonadales</taxon>
        <taxon>Pseudomonadaceae</taxon>
        <taxon>Azotobacter</taxon>
    </lineage>
</organism>
<keyword id="KW-0903">Direct protein sequencing</keyword>
<keyword id="KW-0249">Electron transport</keyword>
<keyword id="KW-0285">Flavoprotein</keyword>
<keyword id="KW-0288">FMN</keyword>
<keyword id="KW-0813">Transport</keyword>
<evidence type="ECO:0000255" key="1">
    <source>
        <dbReference type="PROSITE-ProRule" id="PRU00088"/>
    </source>
</evidence>
<evidence type="ECO:0000269" key="2">
    <source>
    </source>
</evidence>
<evidence type="ECO:0000303" key="3">
    <source>
    </source>
</evidence>
<evidence type="ECO:0000305" key="4"/>
<evidence type="ECO:0000312" key="5">
    <source>
        <dbReference type="EMBL" id="ACO80705.1"/>
    </source>
</evidence>
<protein>
    <recommendedName>
        <fullName evidence="3">Flavodoxin 1</fullName>
    </recommendedName>
    <alternativeName>
        <fullName evidence="3">AvFld 1</fullName>
    </alternativeName>
</protein>
<dbReference type="EMBL" id="CP001157">
    <property type="protein sequence ID" value="ACO80705.1"/>
    <property type="molecule type" value="Genomic_DNA"/>
</dbReference>
<dbReference type="RefSeq" id="WP_012703069.1">
    <property type="nucleotide sequence ID" value="NC_012560.1"/>
</dbReference>
<dbReference type="SMR" id="P52964"/>
<dbReference type="STRING" id="322710.Avin_45950"/>
<dbReference type="EnsemblBacteria" id="ACO80705">
    <property type="protein sequence ID" value="ACO80705"/>
    <property type="gene ID" value="Avin_45950"/>
</dbReference>
<dbReference type="GeneID" id="88187476"/>
<dbReference type="KEGG" id="avn:Avin_45950"/>
<dbReference type="eggNOG" id="COG0716">
    <property type="taxonomic scope" value="Bacteria"/>
</dbReference>
<dbReference type="HOGENOM" id="CLU_051402_1_0_6"/>
<dbReference type="OrthoDB" id="359268at2"/>
<dbReference type="Proteomes" id="UP000002424">
    <property type="component" value="Chromosome"/>
</dbReference>
<dbReference type="GO" id="GO:0009055">
    <property type="term" value="F:electron transfer activity"/>
    <property type="evidence" value="ECO:0007669"/>
    <property type="project" value="InterPro"/>
</dbReference>
<dbReference type="GO" id="GO:0010181">
    <property type="term" value="F:FMN binding"/>
    <property type="evidence" value="ECO:0007669"/>
    <property type="project" value="InterPro"/>
</dbReference>
<dbReference type="GO" id="GO:0016655">
    <property type="term" value="F:oxidoreductase activity, acting on NAD(P)H, quinone or similar compound as acceptor"/>
    <property type="evidence" value="ECO:0007669"/>
    <property type="project" value="UniProtKB-ARBA"/>
</dbReference>
<dbReference type="Gene3D" id="3.40.50.360">
    <property type="match status" value="1"/>
</dbReference>
<dbReference type="InterPro" id="IPR050619">
    <property type="entry name" value="Flavodoxin"/>
</dbReference>
<dbReference type="InterPro" id="IPR008254">
    <property type="entry name" value="Flavodoxin/NO_synth"/>
</dbReference>
<dbReference type="InterPro" id="IPR001226">
    <property type="entry name" value="Flavodoxin_CS"/>
</dbReference>
<dbReference type="InterPro" id="IPR010086">
    <property type="entry name" value="Flavodoxin_lc"/>
</dbReference>
<dbReference type="InterPro" id="IPR029039">
    <property type="entry name" value="Flavoprotein-like_sf"/>
</dbReference>
<dbReference type="NCBIfam" id="TIGR01752">
    <property type="entry name" value="flav_long"/>
    <property type="match status" value="1"/>
</dbReference>
<dbReference type="NCBIfam" id="NF006739">
    <property type="entry name" value="PRK09267.1-5"/>
    <property type="match status" value="1"/>
</dbReference>
<dbReference type="PANTHER" id="PTHR42809:SF1">
    <property type="entry name" value="FLAVODOXIN 1"/>
    <property type="match status" value="1"/>
</dbReference>
<dbReference type="PANTHER" id="PTHR42809">
    <property type="entry name" value="FLAVODOXIN 2"/>
    <property type="match status" value="1"/>
</dbReference>
<dbReference type="Pfam" id="PF00258">
    <property type="entry name" value="Flavodoxin_1"/>
    <property type="match status" value="1"/>
</dbReference>
<dbReference type="PIRSF" id="PIRSF038996">
    <property type="entry name" value="FldA"/>
    <property type="match status" value="1"/>
</dbReference>
<dbReference type="SUPFAM" id="SSF52218">
    <property type="entry name" value="Flavoproteins"/>
    <property type="match status" value="1"/>
</dbReference>
<dbReference type="PROSITE" id="PS00201">
    <property type="entry name" value="FLAVODOXIN"/>
    <property type="match status" value="1"/>
</dbReference>
<dbReference type="PROSITE" id="PS50902">
    <property type="entry name" value="FLAVODOXIN_LIKE"/>
    <property type="match status" value="1"/>
</dbReference>
<proteinExistence type="evidence at protein level"/>
<accession>P52964</accession>
<accession>C1DHX2</accession>
<feature type="initiator methionine" description="Removed" evidence="2">
    <location>
        <position position="1"/>
    </location>
</feature>
<feature type="chain" id="PRO_0000171606" description="Flavodoxin 1">
    <location>
        <begin position="2"/>
        <end position="174"/>
    </location>
</feature>
<feature type="domain" description="Flavodoxin-like" evidence="1">
    <location>
        <begin position="4"/>
        <end position="168"/>
    </location>
</feature>
<feature type="binding site" evidence="1">
    <location>
        <begin position="10"/>
        <end position="14"/>
    </location>
    <ligand>
        <name>FMN</name>
        <dbReference type="ChEBI" id="CHEBI:58210"/>
    </ligand>
</feature>
<feature type="binding site" evidence="1">
    <location>
        <begin position="89"/>
        <end position="122"/>
    </location>
    <ligand>
        <name>FMN</name>
        <dbReference type="ChEBI" id="CHEBI:58210"/>
    </ligand>
</feature>
<comment type="function">
    <text evidence="2">Flavodoxins are low-potential electron donors to a number of redox enzymes. AvFld 1 is able to donate electrons to the assimilatory nitrate reductase of A.vinelandii to catalyze the reduction of nitrate to nitrite.</text>
</comment>
<comment type="cofactor">
    <cofactor evidence="2">
        <name>FMN</name>
        <dbReference type="ChEBI" id="CHEBI:58210"/>
    </cofactor>
</comment>
<comment type="biophysicochemical properties">
    <redoxPotential>
        <text evidence="2">E(0) is -330 mV. It is the mid-point potential of the semiquinone/hydroquinone redox couple (SQ/HQ) of AvFld 1.</text>
    </redoxPotential>
</comment>
<comment type="induction">
    <text evidence="2">Is the predominant flavodoxin expressed when A.vinelandii is grown on nitrate as nitrogen source.</text>
</comment>
<comment type="mass spectrometry" mass="19430.0" error="3.0" method="Electrospray" evidence="2"/>
<comment type="similarity">
    <text evidence="4">Belongs to the flavodoxin family.</text>
</comment>